<organism>
    <name type="scientific">Arabidopsis thaliana</name>
    <name type="common">Mouse-ear cress</name>
    <dbReference type="NCBI Taxonomy" id="3702"/>
    <lineage>
        <taxon>Eukaryota</taxon>
        <taxon>Viridiplantae</taxon>
        <taxon>Streptophyta</taxon>
        <taxon>Embryophyta</taxon>
        <taxon>Tracheophyta</taxon>
        <taxon>Spermatophyta</taxon>
        <taxon>Magnoliopsida</taxon>
        <taxon>eudicotyledons</taxon>
        <taxon>Gunneridae</taxon>
        <taxon>Pentapetalae</taxon>
        <taxon>rosids</taxon>
        <taxon>malvids</taxon>
        <taxon>Brassicales</taxon>
        <taxon>Brassicaceae</taxon>
        <taxon>Camelineae</taxon>
        <taxon>Arabidopsis</taxon>
    </lineage>
</organism>
<dbReference type="EMBL" id="AC068602">
    <property type="protein sequence ID" value="AAF79283.1"/>
    <property type="status" value="ALT_SEQ"/>
    <property type="molecule type" value="Genomic_DNA"/>
</dbReference>
<dbReference type="EMBL" id="AC068602">
    <property type="protein sequence ID" value="AAF79284.1"/>
    <property type="status" value="ALT_SEQ"/>
    <property type="molecule type" value="Genomic_DNA"/>
</dbReference>
<dbReference type="EMBL" id="CP002684">
    <property type="protein sequence ID" value="AEE29783.1"/>
    <property type="molecule type" value="Genomic_DNA"/>
</dbReference>
<dbReference type="PIR" id="D86323">
    <property type="entry name" value="D86323"/>
</dbReference>
<dbReference type="RefSeq" id="NP_173329.2">
    <property type="nucleotide sequence ID" value="NM_101752.4"/>
</dbReference>
<dbReference type="FunCoup" id="F4IDY7">
    <property type="interactions" value="2610"/>
</dbReference>
<dbReference type="STRING" id="3702.F4IDY7"/>
<dbReference type="iPTMnet" id="F4IDY7"/>
<dbReference type="PaxDb" id="3702-AT1G18950.1"/>
<dbReference type="EnsemblPlants" id="AT1G18950.1">
    <property type="protein sequence ID" value="AT1G18950.1"/>
    <property type="gene ID" value="AT1G18950"/>
</dbReference>
<dbReference type="GeneID" id="838476"/>
<dbReference type="Gramene" id="AT1G18950.1">
    <property type="protein sequence ID" value="AT1G18950.1"/>
    <property type="gene ID" value="AT1G18950"/>
</dbReference>
<dbReference type="KEGG" id="ath:AT1G18950"/>
<dbReference type="Araport" id="AT1G18950"/>
<dbReference type="TAIR" id="AT1G18950"/>
<dbReference type="eggNOG" id="ENOG502QUDP">
    <property type="taxonomic scope" value="Eukaryota"/>
</dbReference>
<dbReference type="HOGENOM" id="CLU_022510_0_0_1"/>
<dbReference type="InParanoid" id="F4IDY7"/>
<dbReference type="OMA" id="TKHETST"/>
<dbReference type="OrthoDB" id="303107at2759"/>
<dbReference type="PRO" id="PR:F4IDY7"/>
<dbReference type="Proteomes" id="UP000006548">
    <property type="component" value="Chromosome 1"/>
</dbReference>
<dbReference type="ExpressionAtlas" id="F4IDY7">
    <property type="expression patterns" value="baseline and differential"/>
</dbReference>
<dbReference type="GO" id="GO:0031010">
    <property type="term" value="C:ISWI-type complex"/>
    <property type="evidence" value="ECO:0000314"/>
    <property type="project" value="TAIR"/>
</dbReference>
<dbReference type="GO" id="GO:0031213">
    <property type="term" value="C:RSF complex"/>
    <property type="evidence" value="ECO:0007669"/>
    <property type="project" value="InterPro"/>
</dbReference>
<dbReference type="GO" id="GO:0006355">
    <property type="term" value="P:regulation of DNA-templated transcription"/>
    <property type="evidence" value="ECO:0007669"/>
    <property type="project" value="InterPro"/>
</dbReference>
<dbReference type="InterPro" id="IPR018501">
    <property type="entry name" value="DDT_dom"/>
</dbReference>
<dbReference type="InterPro" id="IPR028938">
    <property type="entry name" value="Rsf1-like"/>
</dbReference>
<dbReference type="PANTHER" id="PTHR14296:SF3">
    <property type="entry name" value="DIKAR, ISOFORM F"/>
    <property type="match status" value="1"/>
</dbReference>
<dbReference type="PANTHER" id="PTHR14296">
    <property type="entry name" value="REMODELING AND SPACING FACTOR 1"/>
    <property type="match status" value="1"/>
</dbReference>
<dbReference type="Pfam" id="PF02791">
    <property type="entry name" value="DDT"/>
    <property type="match status" value="1"/>
</dbReference>
<name>DDR4_ARATH</name>
<keyword id="KW-0539">Nucleus</keyword>
<keyword id="KW-1185">Reference proteome</keyword>
<keyword id="KW-0804">Transcription</keyword>
<keyword id="KW-0805">Transcription regulation</keyword>
<comment type="function">
    <text evidence="6">Probable transcription regulator.</text>
</comment>
<comment type="subunit">
    <text evidence="3">Interacts (via the DDT domain) with CHR11 (via C-terminus).</text>
</comment>
<comment type="subcellular location">
    <subcellularLocation>
        <location evidence="1">Nucleus</location>
    </subcellularLocation>
</comment>
<comment type="sequence caution" evidence="5">
    <conflict type="erroneous gene model prediction">
        <sequence resource="EMBL-CDS" id="AAF79283"/>
    </conflict>
    <text>Was originally thought to correspond to two different genes.</text>
</comment>
<comment type="sequence caution" evidence="5">
    <conflict type="erroneous gene model prediction">
        <sequence resource="EMBL-CDS" id="AAF79284"/>
    </conflict>
    <text>Was originally thought to correspond to two different genes.</text>
</comment>
<sequence length="750" mass="86250">MGSSSDIVPDRSPADDVAPVTDTKIPKEEPLTLRRTRPSRACTVRAQQRLQELQAAERKLKPPKKEYKREQHRRREEVVEEDEDSEDDDQEDEENDGDDESNPKQCVAGGSSTKIITSLVPPPEPSQMPRWNLRSMWELASVLNFLHVFRPLLKINAEFSAEEFETALLTPNDTLSDIHIPLLKAIPPVTRMALTRDTWVTVLCRKIRDCWHWVAEGDLPIVALQGREIEVYKNLDPAIRVVILKALCDIRVEQEDIRSYIDNSLKTGVHLSVFRKDRVGGDSHGVNFWYEEDPLIGHRLYREIRKAEVLKVKTKGSKILPNITYQWETVATNFDEFQDVSEKLLQSSSRIEVSLGKKLVKDMLPEIEKEHKRKEKLLKKQHRQALLLDNFVVVDGLAGRSLRDRKPVRYTFDDYDKSINDAIKITKKKHPSPEHPLHRRESARLDALANGRSTSSTHPTEPVNDTASGRSSDFADYDDFDEHRDESLDRRRRQRPQRYSATDFVETVSDNEVEFQSDDDIYGEAVYDEEYLKKRKQKKLSSGSEGDEEKGDEEYKWDEDNAEYEEEEEEEEEEDSLSASEEDSDEPRRAKKMPRRETKLRSRSNDFRPGLRRSKRATRIDYQQYEFSDSDKEATGLAKRKRFVEPDEPSDETGNGDFTMGSQDSEENANDPETKSGEEEEPRDVNDNADTTNGKENNQLNKSNGTTDQEEVEGVVGKRRYLDLNELAPVSGFDDGPSTVLKDDDKTDNS</sequence>
<proteinExistence type="evidence at protein level"/>
<evidence type="ECO:0000255" key="1">
    <source>
        <dbReference type="PROSITE-ProRule" id="PRU00063"/>
    </source>
</evidence>
<evidence type="ECO:0000256" key="2">
    <source>
        <dbReference type="SAM" id="MobiDB-lite"/>
    </source>
</evidence>
<evidence type="ECO:0000269" key="3">
    <source>
    </source>
</evidence>
<evidence type="ECO:0000303" key="4">
    <source>
    </source>
</evidence>
<evidence type="ECO:0000305" key="5"/>
<evidence type="ECO:0000305" key="6">
    <source>
    </source>
</evidence>
<evidence type="ECO:0000312" key="7">
    <source>
        <dbReference type="Araport" id="AT1G18950"/>
    </source>
</evidence>
<evidence type="ECO:0000312" key="8">
    <source>
        <dbReference type="EMBL" id="AAF79283.1"/>
    </source>
</evidence>
<evidence type="ECO:0000312" key="9">
    <source>
        <dbReference type="EMBL" id="AAF79284.1"/>
    </source>
</evidence>
<accession>F4IDY7</accession>
<accession>Q9LMD2</accession>
<accession>Q9LMD3</accession>
<protein>
    <recommendedName>
        <fullName evidence="5">DDT domain-containing protein DDR4</fullName>
    </recommendedName>
    <alternativeName>
        <fullName evidence="4">DDT-related protein 4</fullName>
    </alternativeName>
</protein>
<reference key="1">
    <citation type="journal article" date="2000" name="Nature">
        <title>Sequence and analysis of chromosome 1 of the plant Arabidopsis thaliana.</title>
        <authorList>
            <person name="Theologis A."/>
            <person name="Ecker J.R."/>
            <person name="Palm C.J."/>
            <person name="Federspiel N.A."/>
            <person name="Kaul S."/>
            <person name="White O."/>
            <person name="Alonso J."/>
            <person name="Altafi H."/>
            <person name="Araujo R."/>
            <person name="Bowman C.L."/>
            <person name="Brooks S.Y."/>
            <person name="Buehler E."/>
            <person name="Chan A."/>
            <person name="Chao Q."/>
            <person name="Chen H."/>
            <person name="Cheuk R.F."/>
            <person name="Chin C.W."/>
            <person name="Chung M.K."/>
            <person name="Conn L."/>
            <person name="Conway A.B."/>
            <person name="Conway A.R."/>
            <person name="Creasy T.H."/>
            <person name="Dewar K."/>
            <person name="Dunn P."/>
            <person name="Etgu P."/>
            <person name="Feldblyum T.V."/>
            <person name="Feng J.-D."/>
            <person name="Fong B."/>
            <person name="Fujii C.Y."/>
            <person name="Gill J.E."/>
            <person name="Goldsmith A.D."/>
            <person name="Haas B."/>
            <person name="Hansen N.F."/>
            <person name="Hughes B."/>
            <person name="Huizar L."/>
            <person name="Hunter J.L."/>
            <person name="Jenkins J."/>
            <person name="Johnson-Hopson C."/>
            <person name="Khan S."/>
            <person name="Khaykin E."/>
            <person name="Kim C.J."/>
            <person name="Koo H.L."/>
            <person name="Kremenetskaia I."/>
            <person name="Kurtz D.B."/>
            <person name="Kwan A."/>
            <person name="Lam B."/>
            <person name="Langin-Hooper S."/>
            <person name="Lee A."/>
            <person name="Lee J.M."/>
            <person name="Lenz C.A."/>
            <person name="Li J.H."/>
            <person name="Li Y.-P."/>
            <person name="Lin X."/>
            <person name="Liu S.X."/>
            <person name="Liu Z.A."/>
            <person name="Luros J.S."/>
            <person name="Maiti R."/>
            <person name="Marziali A."/>
            <person name="Militscher J."/>
            <person name="Miranda M."/>
            <person name="Nguyen M."/>
            <person name="Nierman W.C."/>
            <person name="Osborne B.I."/>
            <person name="Pai G."/>
            <person name="Peterson J."/>
            <person name="Pham P.K."/>
            <person name="Rizzo M."/>
            <person name="Rooney T."/>
            <person name="Rowley D."/>
            <person name="Sakano H."/>
            <person name="Salzberg S.L."/>
            <person name="Schwartz J.R."/>
            <person name="Shinn P."/>
            <person name="Southwick A.M."/>
            <person name="Sun H."/>
            <person name="Tallon L.J."/>
            <person name="Tambunga G."/>
            <person name="Toriumi M.J."/>
            <person name="Town C.D."/>
            <person name="Utterback T."/>
            <person name="Van Aken S."/>
            <person name="Vaysberg M."/>
            <person name="Vysotskaia V.S."/>
            <person name="Walker M."/>
            <person name="Wu D."/>
            <person name="Yu G."/>
            <person name="Fraser C.M."/>
            <person name="Venter J.C."/>
            <person name="Davis R.W."/>
        </authorList>
    </citation>
    <scope>NUCLEOTIDE SEQUENCE [LARGE SCALE GENOMIC DNA]</scope>
    <source>
        <strain>cv. Columbia</strain>
    </source>
</reference>
<reference key="2">
    <citation type="journal article" date="2017" name="Plant J.">
        <title>Araport11: a complete reannotation of the Arabidopsis thaliana reference genome.</title>
        <authorList>
            <person name="Cheng C.Y."/>
            <person name="Krishnakumar V."/>
            <person name="Chan A.P."/>
            <person name="Thibaud-Nissen F."/>
            <person name="Schobel S."/>
            <person name="Town C.D."/>
        </authorList>
    </citation>
    <scope>GENOME REANNOTATION</scope>
    <source>
        <strain>cv. Columbia</strain>
    </source>
</reference>
<reference key="3">
    <citation type="journal article" date="2013" name="J. Integr. Plant Biol.">
        <title>SLIDE, the protein interacting domain of Imitation Switch remodelers, binds DDT-domain proteins of different subfamilies in chromatin remodeling complexes.</title>
        <authorList>
            <person name="Dong J."/>
            <person name="Gao Z."/>
            <person name="Liu S."/>
            <person name="Li G."/>
            <person name="Yang Z."/>
            <person name="Huang H."/>
            <person name="Xu L."/>
        </authorList>
    </citation>
    <scope>INTERACTION WITH CHR11</scope>
</reference>
<gene>
    <name evidence="4" type="primary">DDR4</name>
    <name evidence="7" type="ordered locus">At1g18950</name>
    <name evidence="8 9" type="ORF">F14D16.9/F14D16.10</name>
</gene>
<feature type="chain" id="PRO_0000435122" description="DDT domain-containing protein DDR4">
    <location>
        <begin position="1"/>
        <end position="750"/>
    </location>
</feature>
<feature type="domain" description="DDT" evidence="1">
    <location>
        <begin position="133"/>
        <end position="192"/>
    </location>
</feature>
<feature type="region of interest" description="Disordered" evidence="2">
    <location>
        <begin position="1"/>
        <end position="125"/>
    </location>
</feature>
<feature type="region of interest" description="Disordered" evidence="2">
    <location>
        <begin position="450"/>
        <end position="505"/>
    </location>
</feature>
<feature type="region of interest" description="Disordered" evidence="2">
    <location>
        <begin position="532"/>
        <end position="750"/>
    </location>
</feature>
<feature type="compositionally biased region" description="Low complexity" evidence="2">
    <location>
        <begin position="45"/>
        <end position="54"/>
    </location>
</feature>
<feature type="compositionally biased region" description="Basic and acidic residues" evidence="2">
    <location>
        <begin position="55"/>
        <end position="77"/>
    </location>
</feature>
<feature type="compositionally biased region" description="Acidic residues" evidence="2">
    <location>
        <begin position="78"/>
        <end position="100"/>
    </location>
</feature>
<feature type="compositionally biased region" description="Polar residues" evidence="2">
    <location>
        <begin position="451"/>
        <end position="471"/>
    </location>
</feature>
<feature type="compositionally biased region" description="Acidic residues" evidence="2">
    <location>
        <begin position="545"/>
        <end position="585"/>
    </location>
</feature>
<feature type="compositionally biased region" description="Basic and acidic residues" evidence="2">
    <location>
        <begin position="595"/>
        <end position="606"/>
    </location>
</feature>
<feature type="compositionally biased region" description="Polar residues" evidence="2">
    <location>
        <begin position="688"/>
        <end position="707"/>
    </location>
</feature>
<feature type="compositionally biased region" description="Basic and acidic residues" evidence="2">
    <location>
        <begin position="741"/>
        <end position="750"/>
    </location>
</feature>